<proteinExistence type="inferred from homology"/>
<protein>
    <recommendedName>
        <fullName evidence="1">Co-chaperonin GroES 2</fullName>
    </recommendedName>
    <alternativeName>
        <fullName evidence="1">10 kDa chaperonin 2</fullName>
    </alternativeName>
    <alternativeName>
        <fullName evidence="1">Chaperonin-10 2</fullName>
        <shortName evidence="1">Cpn10 2</shortName>
    </alternativeName>
</protein>
<evidence type="ECO:0000255" key="1">
    <source>
        <dbReference type="HAMAP-Rule" id="MF_00580"/>
    </source>
</evidence>
<evidence type="ECO:0000305" key="2"/>
<name>CH102_VIBVU</name>
<dbReference type="EMBL" id="AE016796">
    <property type="protein sequence ID" value="AAO08036.1"/>
    <property type="molecule type" value="Genomic_DNA"/>
</dbReference>
<dbReference type="RefSeq" id="WP_011082031.1">
    <property type="nucleotide sequence ID" value="NC_004460.2"/>
</dbReference>
<dbReference type="SMR" id="Q8CWI9"/>
<dbReference type="KEGG" id="vvu:VV2_1135"/>
<dbReference type="HOGENOM" id="CLU_132825_1_1_6"/>
<dbReference type="Proteomes" id="UP000002275">
    <property type="component" value="Chromosome 2"/>
</dbReference>
<dbReference type="GO" id="GO:0005737">
    <property type="term" value="C:cytoplasm"/>
    <property type="evidence" value="ECO:0007669"/>
    <property type="project" value="UniProtKB-SubCell"/>
</dbReference>
<dbReference type="GO" id="GO:0005524">
    <property type="term" value="F:ATP binding"/>
    <property type="evidence" value="ECO:0007669"/>
    <property type="project" value="InterPro"/>
</dbReference>
<dbReference type="GO" id="GO:0046872">
    <property type="term" value="F:metal ion binding"/>
    <property type="evidence" value="ECO:0007669"/>
    <property type="project" value="TreeGrafter"/>
</dbReference>
<dbReference type="GO" id="GO:0044183">
    <property type="term" value="F:protein folding chaperone"/>
    <property type="evidence" value="ECO:0007669"/>
    <property type="project" value="InterPro"/>
</dbReference>
<dbReference type="GO" id="GO:0051087">
    <property type="term" value="F:protein-folding chaperone binding"/>
    <property type="evidence" value="ECO:0007669"/>
    <property type="project" value="TreeGrafter"/>
</dbReference>
<dbReference type="GO" id="GO:0051082">
    <property type="term" value="F:unfolded protein binding"/>
    <property type="evidence" value="ECO:0007669"/>
    <property type="project" value="TreeGrafter"/>
</dbReference>
<dbReference type="GO" id="GO:0051085">
    <property type="term" value="P:chaperone cofactor-dependent protein refolding"/>
    <property type="evidence" value="ECO:0007669"/>
    <property type="project" value="TreeGrafter"/>
</dbReference>
<dbReference type="CDD" id="cd00320">
    <property type="entry name" value="cpn10"/>
    <property type="match status" value="1"/>
</dbReference>
<dbReference type="FunFam" id="2.30.33.40:FF:000001">
    <property type="entry name" value="10 kDa chaperonin"/>
    <property type="match status" value="1"/>
</dbReference>
<dbReference type="Gene3D" id="2.30.33.40">
    <property type="entry name" value="GroES chaperonin"/>
    <property type="match status" value="1"/>
</dbReference>
<dbReference type="HAMAP" id="MF_00580">
    <property type="entry name" value="CH10"/>
    <property type="match status" value="1"/>
</dbReference>
<dbReference type="InterPro" id="IPR020818">
    <property type="entry name" value="Chaperonin_GroES"/>
</dbReference>
<dbReference type="InterPro" id="IPR037124">
    <property type="entry name" value="Chaperonin_GroES_sf"/>
</dbReference>
<dbReference type="InterPro" id="IPR018369">
    <property type="entry name" value="Chaprnonin_Cpn10_CS"/>
</dbReference>
<dbReference type="InterPro" id="IPR011032">
    <property type="entry name" value="GroES-like_sf"/>
</dbReference>
<dbReference type="NCBIfam" id="NF001526">
    <property type="entry name" value="PRK00364.1-1"/>
    <property type="match status" value="1"/>
</dbReference>
<dbReference type="PANTHER" id="PTHR10772">
    <property type="entry name" value="10 KDA HEAT SHOCK PROTEIN"/>
    <property type="match status" value="1"/>
</dbReference>
<dbReference type="PANTHER" id="PTHR10772:SF58">
    <property type="entry name" value="CO-CHAPERONIN GROES"/>
    <property type="match status" value="1"/>
</dbReference>
<dbReference type="Pfam" id="PF00166">
    <property type="entry name" value="Cpn10"/>
    <property type="match status" value="1"/>
</dbReference>
<dbReference type="PRINTS" id="PR00297">
    <property type="entry name" value="CHAPERONIN10"/>
</dbReference>
<dbReference type="SMART" id="SM00883">
    <property type="entry name" value="Cpn10"/>
    <property type="match status" value="1"/>
</dbReference>
<dbReference type="SUPFAM" id="SSF50129">
    <property type="entry name" value="GroES-like"/>
    <property type="match status" value="1"/>
</dbReference>
<dbReference type="PROSITE" id="PS00681">
    <property type="entry name" value="CHAPERONINS_CPN10"/>
    <property type="match status" value="1"/>
</dbReference>
<reference key="1">
    <citation type="submission" date="2002-12" db="EMBL/GenBank/DDBJ databases">
        <title>Complete genome sequence of Vibrio vulnificus CMCP6.</title>
        <authorList>
            <person name="Rhee J.H."/>
            <person name="Kim S.Y."/>
            <person name="Chung S.S."/>
            <person name="Kim J.J."/>
            <person name="Moon Y.H."/>
            <person name="Jeong H."/>
            <person name="Choy H.E."/>
        </authorList>
    </citation>
    <scope>NUCLEOTIDE SEQUENCE [LARGE SCALE GENOMIC DNA]</scope>
    <source>
        <strain>CMCP6</strain>
    </source>
</reference>
<sequence length="96" mass="10535">MNIRPLNDKLIVERQEVENKSEGGIVLTSQSVKKSNRGKVIAAGLGKRLENGERASMEVKVGDVVIFNDGYGVKTEKMDGKEYLILSESDVLAIVE</sequence>
<comment type="function">
    <text evidence="1">Together with the chaperonin GroEL, plays an essential role in assisting protein folding. The GroEL-GroES system forms a nano-cage that allows encapsulation of the non-native substrate proteins and provides a physical environment optimized to promote and accelerate protein folding. GroES binds to the apical surface of the GroEL ring, thereby capping the opening of the GroEL channel.</text>
</comment>
<comment type="subunit">
    <text evidence="1">Heptamer of 7 subunits arranged in a ring. Interacts with the chaperonin GroEL.</text>
</comment>
<comment type="subcellular location">
    <subcellularLocation>
        <location evidence="1">Cytoplasm</location>
    </subcellularLocation>
</comment>
<comment type="similarity">
    <text evidence="1 2">Belongs to the GroES chaperonin family.</text>
</comment>
<accession>Q8CWI9</accession>
<gene>
    <name evidence="1" type="primary">groES2</name>
    <name evidence="1" type="synonym">groS2</name>
    <name type="ordered locus">VV2_1135</name>
</gene>
<organism>
    <name type="scientific">Vibrio vulnificus (strain CMCP6)</name>
    <dbReference type="NCBI Taxonomy" id="216895"/>
    <lineage>
        <taxon>Bacteria</taxon>
        <taxon>Pseudomonadati</taxon>
        <taxon>Pseudomonadota</taxon>
        <taxon>Gammaproteobacteria</taxon>
        <taxon>Vibrionales</taxon>
        <taxon>Vibrionaceae</taxon>
        <taxon>Vibrio</taxon>
    </lineage>
</organism>
<keyword id="KW-0143">Chaperone</keyword>
<keyword id="KW-0963">Cytoplasm</keyword>
<feature type="chain" id="PRO_0000174897" description="Co-chaperonin GroES 2">
    <location>
        <begin position="1"/>
        <end position="96"/>
    </location>
</feature>